<protein>
    <recommendedName>
        <fullName evidence="1">GTPase Era</fullName>
    </recommendedName>
</protein>
<reference key="1">
    <citation type="submission" date="2008-02" db="EMBL/GenBank/DDBJ databases">
        <title>Complete sequence of Yersinia pseudotuberculosis YPIII.</title>
        <authorList>
            <consortium name="US DOE Joint Genome Institute"/>
            <person name="Copeland A."/>
            <person name="Lucas S."/>
            <person name="Lapidus A."/>
            <person name="Glavina del Rio T."/>
            <person name="Dalin E."/>
            <person name="Tice H."/>
            <person name="Bruce D."/>
            <person name="Goodwin L."/>
            <person name="Pitluck S."/>
            <person name="Munk A.C."/>
            <person name="Brettin T."/>
            <person name="Detter J.C."/>
            <person name="Han C."/>
            <person name="Tapia R."/>
            <person name="Schmutz J."/>
            <person name="Larimer F."/>
            <person name="Land M."/>
            <person name="Hauser L."/>
            <person name="Challacombe J.F."/>
            <person name="Green L."/>
            <person name="Lindler L.E."/>
            <person name="Nikolich M.P."/>
            <person name="Richardson P."/>
        </authorList>
    </citation>
    <scope>NUCLEOTIDE SEQUENCE [LARGE SCALE GENOMIC DNA]</scope>
    <source>
        <strain>YPIII</strain>
    </source>
</reference>
<evidence type="ECO:0000255" key="1">
    <source>
        <dbReference type="HAMAP-Rule" id="MF_00367"/>
    </source>
</evidence>
<evidence type="ECO:0000255" key="2">
    <source>
        <dbReference type="PROSITE-ProRule" id="PRU01050"/>
    </source>
</evidence>
<comment type="function">
    <text evidence="1">An essential GTPase that binds both GDP and GTP, with rapid nucleotide exchange. Plays a role in 16S rRNA processing and 30S ribosomal subunit biogenesis and possibly also in cell cycle regulation and energy metabolism.</text>
</comment>
<comment type="subunit">
    <text evidence="1">Monomer.</text>
</comment>
<comment type="subcellular location">
    <subcellularLocation>
        <location>Cytoplasm</location>
    </subcellularLocation>
    <subcellularLocation>
        <location evidence="1">Cell inner membrane</location>
        <topology evidence="1">Peripheral membrane protein</topology>
    </subcellularLocation>
</comment>
<comment type="similarity">
    <text evidence="1 2">Belongs to the TRAFAC class TrmE-Era-EngA-EngB-Septin-like GTPase superfamily. Era GTPase family.</text>
</comment>
<gene>
    <name evidence="1" type="primary">era</name>
    <name type="ordered locus">YPK_1190</name>
</gene>
<dbReference type="EMBL" id="CP000950">
    <property type="protein sequence ID" value="ACA67488.1"/>
    <property type="molecule type" value="Genomic_DNA"/>
</dbReference>
<dbReference type="RefSeq" id="WP_002214829.1">
    <property type="nucleotide sequence ID" value="NZ_CP009792.1"/>
</dbReference>
<dbReference type="SMR" id="B1JRC8"/>
<dbReference type="GeneID" id="96662248"/>
<dbReference type="KEGG" id="ypy:YPK_1190"/>
<dbReference type="PATRIC" id="fig|502800.11.peg.1825"/>
<dbReference type="GO" id="GO:0005829">
    <property type="term" value="C:cytosol"/>
    <property type="evidence" value="ECO:0007669"/>
    <property type="project" value="TreeGrafter"/>
</dbReference>
<dbReference type="GO" id="GO:0005886">
    <property type="term" value="C:plasma membrane"/>
    <property type="evidence" value="ECO:0007669"/>
    <property type="project" value="UniProtKB-SubCell"/>
</dbReference>
<dbReference type="GO" id="GO:0005525">
    <property type="term" value="F:GTP binding"/>
    <property type="evidence" value="ECO:0007669"/>
    <property type="project" value="UniProtKB-UniRule"/>
</dbReference>
<dbReference type="GO" id="GO:0003924">
    <property type="term" value="F:GTPase activity"/>
    <property type="evidence" value="ECO:0007669"/>
    <property type="project" value="UniProtKB-UniRule"/>
</dbReference>
<dbReference type="GO" id="GO:0043024">
    <property type="term" value="F:ribosomal small subunit binding"/>
    <property type="evidence" value="ECO:0007669"/>
    <property type="project" value="TreeGrafter"/>
</dbReference>
<dbReference type="GO" id="GO:0070181">
    <property type="term" value="F:small ribosomal subunit rRNA binding"/>
    <property type="evidence" value="ECO:0007669"/>
    <property type="project" value="UniProtKB-UniRule"/>
</dbReference>
<dbReference type="GO" id="GO:0000028">
    <property type="term" value="P:ribosomal small subunit assembly"/>
    <property type="evidence" value="ECO:0007669"/>
    <property type="project" value="TreeGrafter"/>
</dbReference>
<dbReference type="CDD" id="cd04163">
    <property type="entry name" value="Era"/>
    <property type="match status" value="1"/>
</dbReference>
<dbReference type="CDD" id="cd22534">
    <property type="entry name" value="KH-II_Era"/>
    <property type="match status" value="1"/>
</dbReference>
<dbReference type="FunFam" id="3.30.300.20:FF:000003">
    <property type="entry name" value="GTPase Era"/>
    <property type="match status" value="1"/>
</dbReference>
<dbReference type="FunFam" id="3.40.50.300:FF:000094">
    <property type="entry name" value="GTPase Era"/>
    <property type="match status" value="1"/>
</dbReference>
<dbReference type="Gene3D" id="3.30.300.20">
    <property type="match status" value="1"/>
</dbReference>
<dbReference type="Gene3D" id="3.40.50.300">
    <property type="entry name" value="P-loop containing nucleotide triphosphate hydrolases"/>
    <property type="match status" value="1"/>
</dbReference>
<dbReference type="HAMAP" id="MF_00367">
    <property type="entry name" value="GTPase_Era"/>
    <property type="match status" value="1"/>
</dbReference>
<dbReference type="InterPro" id="IPR030388">
    <property type="entry name" value="G_ERA_dom"/>
</dbReference>
<dbReference type="InterPro" id="IPR006073">
    <property type="entry name" value="GTP-bd"/>
</dbReference>
<dbReference type="InterPro" id="IPR005662">
    <property type="entry name" value="GTPase_Era-like"/>
</dbReference>
<dbReference type="InterPro" id="IPR015946">
    <property type="entry name" value="KH_dom-like_a/b"/>
</dbReference>
<dbReference type="InterPro" id="IPR004044">
    <property type="entry name" value="KH_dom_type_2"/>
</dbReference>
<dbReference type="InterPro" id="IPR009019">
    <property type="entry name" value="KH_sf_prok-type"/>
</dbReference>
<dbReference type="InterPro" id="IPR027417">
    <property type="entry name" value="P-loop_NTPase"/>
</dbReference>
<dbReference type="InterPro" id="IPR005225">
    <property type="entry name" value="Small_GTP-bd"/>
</dbReference>
<dbReference type="NCBIfam" id="TIGR00436">
    <property type="entry name" value="era"/>
    <property type="match status" value="1"/>
</dbReference>
<dbReference type="NCBIfam" id="NF000908">
    <property type="entry name" value="PRK00089.1"/>
    <property type="match status" value="1"/>
</dbReference>
<dbReference type="NCBIfam" id="TIGR00231">
    <property type="entry name" value="small_GTP"/>
    <property type="match status" value="1"/>
</dbReference>
<dbReference type="PANTHER" id="PTHR42698">
    <property type="entry name" value="GTPASE ERA"/>
    <property type="match status" value="1"/>
</dbReference>
<dbReference type="PANTHER" id="PTHR42698:SF1">
    <property type="entry name" value="GTPASE ERA, MITOCHONDRIAL"/>
    <property type="match status" value="1"/>
</dbReference>
<dbReference type="Pfam" id="PF07650">
    <property type="entry name" value="KH_2"/>
    <property type="match status" value="1"/>
</dbReference>
<dbReference type="Pfam" id="PF01926">
    <property type="entry name" value="MMR_HSR1"/>
    <property type="match status" value="1"/>
</dbReference>
<dbReference type="SUPFAM" id="SSF52540">
    <property type="entry name" value="P-loop containing nucleoside triphosphate hydrolases"/>
    <property type="match status" value="1"/>
</dbReference>
<dbReference type="SUPFAM" id="SSF54814">
    <property type="entry name" value="Prokaryotic type KH domain (KH-domain type II)"/>
    <property type="match status" value="1"/>
</dbReference>
<dbReference type="PROSITE" id="PS51713">
    <property type="entry name" value="G_ERA"/>
    <property type="match status" value="1"/>
</dbReference>
<dbReference type="PROSITE" id="PS50823">
    <property type="entry name" value="KH_TYPE_2"/>
    <property type="match status" value="1"/>
</dbReference>
<name>ERA_YERPY</name>
<sequence length="303" mass="34473">MSEVEKTYCGFIAIVGRPNVGKSTLLNELLGQKISITSRKPQTTRHRIMGIHTEGPYQAIYVDTPGLHIEEKRAINRLMNRAASSSLGDVELVIFVVEGTHWTADDEMVVNKLRSLQCPVLLAINKVDNVTDKTKLLPHMQFLSQQMNFLDVVPISAEKGMNVDTIASIVRKHMPEAEHHFPEDYITDRSQRFMASEIIREKLMRFLGEELPYSVTVEIEQFVPNERGGYNIHGLILVEREGQKKMVIGNKGSKIKVIGTEARQDMERMFEAKVHLELWVKVKSGWADDERALRSLGYTDDLK</sequence>
<organism>
    <name type="scientific">Yersinia pseudotuberculosis serotype O:3 (strain YPIII)</name>
    <dbReference type="NCBI Taxonomy" id="502800"/>
    <lineage>
        <taxon>Bacteria</taxon>
        <taxon>Pseudomonadati</taxon>
        <taxon>Pseudomonadota</taxon>
        <taxon>Gammaproteobacteria</taxon>
        <taxon>Enterobacterales</taxon>
        <taxon>Yersiniaceae</taxon>
        <taxon>Yersinia</taxon>
    </lineage>
</organism>
<accession>B1JRC8</accession>
<feature type="chain" id="PRO_1000121373" description="GTPase Era">
    <location>
        <begin position="1"/>
        <end position="303"/>
    </location>
</feature>
<feature type="domain" description="Era-type G" evidence="2">
    <location>
        <begin position="8"/>
        <end position="176"/>
    </location>
</feature>
<feature type="domain" description="KH type-2" evidence="1">
    <location>
        <begin position="207"/>
        <end position="284"/>
    </location>
</feature>
<feature type="region of interest" description="G1" evidence="2">
    <location>
        <begin position="16"/>
        <end position="23"/>
    </location>
</feature>
<feature type="region of interest" description="G2" evidence="2">
    <location>
        <begin position="42"/>
        <end position="46"/>
    </location>
</feature>
<feature type="region of interest" description="G3" evidence="2">
    <location>
        <begin position="63"/>
        <end position="66"/>
    </location>
</feature>
<feature type="region of interest" description="G4" evidence="2">
    <location>
        <begin position="125"/>
        <end position="128"/>
    </location>
</feature>
<feature type="region of interest" description="G5" evidence="2">
    <location>
        <begin position="155"/>
        <end position="157"/>
    </location>
</feature>
<feature type="binding site" evidence="1">
    <location>
        <begin position="16"/>
        <end position="23"/>
    </location>
    <ligand>
        <name>GTP</name>
        <dbReference type="ChEBI" id="CHEBI:37565"/>
    </ligand>
</feature>
<feature type="binding site" evidence="1">
    <location>
        <begin position="63"/>
        <end position="67"/>
    </location>
    <ligand>
        <name>GTP</name>
        <dbReference type="ChEBI" id="CHEBI:37565"/>
    </ligand>
</feature>
<feature type="binding site" evidence="1">
    <location>
        <begin position="125"/>
        <end position="128"/>
    </location>
    <ligand>
        <name>GTP</name>
        <dbReference type="ChEBI" id="CHEBI:37565"/>
    </ligand>
</feature>
<proteinExistence type="inferred from homology"/>
<keyword id="KW-0997">Cell inner membrane</keyword>
<keyword id="KW-1003">Cell membrane</keyword>
<keyword id="KW-0963">Cytoplasm</keyword>
<keyword id="KW-0342">GTP-binding</keyword>
<keyword id="KW-0472">Membrane</keyword>
<keyword id="KW-0547">Nucleotide-binding</keyword>
<keyword id="KW-0690">Ribosome biogenesis</keyword>
<keyword id="KW-0694">RNA-binding</keyword>
<keyword id="KW-0699">rRNA-binding</keyword>